<protein>
    <recommendedName>
        <fullName evidence="1">Protein pelota homolog</fullName>
        <ecNumber evidence="1">3.1.-.-</ecNumber>
    </recommendedName>
</protein>
<proteinExistence type="inferred from homology"/>
<organism>
    <name type="scientific">Desulfurococcus amylolyticus (strain DSM 18924 / JCM 16383 / VKM B-2413 / 1221n)</name>
    <name type="common">Desulfurococcus kamchatkensis</name>
    <dbReference type="NCBI Taxonomy" id="490899"/>
    <lineage>
        <taxon>Archaea</taxon>
        <taxon>Thermoproteota</taxon>
        <taxon>Thermoprotei</taxon>
        <taxon>Desulfurococcales</taxon>
        <taxon>Desulfurococcaceae</taxon>
        <taxon>Desulfurococcus</taxon>
    </lineage>
</organism>
<evidence type="ECO:0000255" key="1">
    <source>
        <dbReference type="HAMAP-Rule" id="MF_01853"/>
    </source>
</evidence>
<dbReference type="EC" id="3.1.-.-" evidence="1"/>
<dbReference type="EMBL" id="CP001140">
    <property type="protein sequence ID" value="ACL11622.1"/>
    <property type="molecule type" value="Genomic_DNA"/>
</dbReference>
<dbReference type="RefSeq" id="WP_012608963.1">
    <property type="nucleotide sequence ID" value="NC_011766.1"/>
</dbReference>
<dbReference type="SMR" id="B8D691"/>
<dbReference type="STRING" id="490899.DKAM_1296"/>
<dbReference type="GeneID" id="7171660"/>
<dbReference type="KEGG" id="dka:DKAM_1296"/>
<dbReference type="eggNOG" id="arCOG01741">
    <property type="taxonomic scope" value="Archaea"/>
</dbReference>
<dbReference type="HOGENOM" id="CLU_023334_0_0_2"/>
<dbReference type="Proteomes" id="UP000006903">
    <property type="component" value="Chromosome"/>
</dbReference>
<dbReference type="GO" id="GO:0005737">
    <property type="term" value="C:cytoplasm"/>
    <property type="evidence" value="ECO:0007669"/>
    <property type="project" value="UniProtKB-SubCell"/>
</dbReference>
<dbReference type="GO" id="GO:0004519">
    <property type="term" value="F:endonuclease activity"/>
    <property type="evidence" value="ECO:0007669"/>
    <property type="project" value="UniProtKB-UniRule"/>
</dbReference>
<dbReference type="GO" id="GO:0046872">
    <property type="term" value="F:metal ion binding"/>
    <property type="evidence" value="ECO:0007669"/>
    <property type="project" value="UniProtKB-UniRule"/>
</dbReference>
<dbReference type="GO" id="GO:0070651">
    <property type="term" value="P:nonfunctional rRNA decay"/>
    <property type="evidence" value="ECO:0007669"/>
    <property type="project" value="TreeGrafter"/>
</dbReference>
<dbReference type="GO" id="GO:0070966">
    <property type="term" value="P:nuclear-transcribed mRNA catabolic process, no-go decay"/>
    <property type="evidence" value="ECO:0007669"/>
    <property type="project" value="InterPro"/>
</dbReference>
<dbReference type="GO" id="GO:0070481">
    <property type="term" value="P:nuclear-transcribed mRNA catabolic process, non-stop decay"/>
    <property type="evidence" value="ECO:0007669"/>
    <property type="project" value="InterPro"/>
</dbReference>
<dbReference type="GO" id="GO:0032790">
    <property type="term" value="P:ribosome disassembly"/>
    <property type="evidence" value="ECO:0007669"/>
    <property type="project" value="TreeGrafter"/>
</dbReference>
<dbReference type="GO" id="GO:0071025">
    <property type="term" value="P:RNA surveillance"/>
    <property type="evidence" value="ECO:0007669"/>
    <property type="project" value="InterPro"/>
</dbReference>
<dbReference type="Gene3D" id="3.30.1330.30">
    <property type="match status" value="1"/>
</dbReference>
<dbReference type="Gene3D" id="3.30.420.60">
    <property type="entry name" value="eRF1 domain 2"/>
    <property type="match status" value="1"/>
</dbReference>
<dbReference type="Gene3D" id="2.30.30.870">
    <property type="entry name" value="Pelota, domain A"/>
    <property type="match status" value="1"/>
</dbReference>
<dbReference type="HAMAP" id="MF_01853">
    <property type="entry name" value="PelO"/>
    <property type="match status" value="1"/>
</dbReference>
<dbReference type="InterPro" id="IPR042226">
    <property type="entry name" value="eFR1_2_sf"/>
</dbReference>
<dbReference type="InterPro" id="IPR005140">
    <property type="entry name" value="eRF1_1_Pelota"/>
</dbReference>
<dbReference type="InterPro" id="IPR005141">
    <property type="entry name" value="eRF1_2"/>
</dbReference>
<dbReference type="InterPro" id="IPR005142">
    <property type="entry name" value="eRF1_3"/>
</dbReference>
<dbReference type="InterPro" id="IPR038069">
    <property type="entry name" value="Pelota/DOM34_N"/>
</dbReference>
<dbReference type="InterPro" id="IPR023521">
    <property type="entry name" value="Pelota_arc"/>
</dbReference>
<dbReference type="InterPro" id="IPR029064">
    <property type="entry name" value="Ribosomal_eL30-like_sf"/>
</dbReference>
<dbReference type="InterPro" id="IPR004405">
    <property type="entry name" value="Transl-rel_pelota"/>
</dbReference>
<dbReference type="NCBIfam" id="TIGR00111">
    <property type="entry name" value="pelota"/>
    <property type="match status" value="1"/>
</dbReference>
<dbReference type="PANTHER" id="PTHR10853">
    <property type="entry name" value="PELOTA"/>
    <property type="match status" value="1"/>
</dbReference>
<dbReference type="PANTHER" id="PTHR10853:SF0">
    <property type="entry name" value="PROTEIN PELOTA HOMOLOG"/>
    <property type="match status" value="1"/>
</dbReference>
<dbReference type="Pfam" id="PF03463">
    <property type="entry name" value="eRF1_1"/>
    <property type="match status" value="1"/>
</dbReference>
<dbReference type="Pfam" id="PF03464">
    <property type="entry name" value="eRF1_2"/>
    <property type="match status" value="1"/>
</dbReference>
<dbReference type="Pfam" id="PF03465">
    <property type="entry name" value="eRF1_3"/>
    <property type="match status" value="1"/>
</dbReference>
<dbReference type="SMART" id="SM01194">
    <property type="entry name" value="eRF1_1"/>
    <property type="match status" value="1"/>
</dbReference>
<dbReference type="SUPFAM" id="SSF159065">
    <property type="entry name" value="Dom34/Pelota N-terminal domain-like"/>
    <property type="match status" value="1"/>
</dbReference>
<dbReference type="SUPFAM" id="SSF55315">
    <property type="entry name" value="L30e-like"/>
    <property type="match status" value="1"/>
</dbReference>
<dbReference type="SUPFAM" id="SSF53137">
    <property type="entry name" value="Translational machinery components"/>
    <property type="match status" value="1"/>
</dbReference>
<sequence>MRVLEEDLRNGYIRILVEDIDDLWILFMVLRKGDIVYARTSREVKPGEGGSSRRIPMVLGLRVEAIEFQEFTEKLRIRGIVVEGPEEFGVKGHYHTIAIGVGDQLAIVRETWSKHSLDILKKGVRRRRILLVSIDYDSACIAVLTEQGVKHHSEIQSDLPGKMYRVEHEEILDEYLSKVASALNNVIQQEEIDAVIIAGPGDLKNKLGENIRRDNRKHVYLDTTSTGGCQGISELLGRDVVKQVVGDLSIVKAKEVVEEFKRLIIKDPQLVAYGVDDVYGAVVYAAVSRIVVAGDLLHEPDDERRARVYEILEKAYETGAEVIIVPGKSDVGLEVQGFGGVIAVLRYRLFRGEHSP</sequence>
<feature type="chain" id="PRO_1000188677" description="Protein pelota homolog">
    <location>
        <begin position="1"/>
        <end position="356"/>
    </location>
</feature>
<name>PELO_DESA1</name>
<accession>B8D691</accession>
<gene>
    <name evidence="1" type="primary">pelA</name>
    <name type="ordered locus">DKAM_1296</name>
</gene>
<keyword id="KW-0963">Cytoplasm</keyword>
<keyword id="KW-0255">Endonuclease</keyword>
<keyword id="KW-0378">Hydrolase</keyword>
<keyword id="KW-0479">Metal-binding</keyword>
<keyword id="KW-0540">Nuclease</keyword>
<reference key="1">
    <citation type="journal article" date="2009" name="J. Bacteriol.">
        <title>Complete genome sequence of the anaerobic, protein-degrading hyperthermophilic crenarchaeon Desulfurococcus kamchatkensis.</title>
        <authorList>
            <person name="Ravin N.V."/>
            <person name="Mardanov A.V."/>
            <person name="Beletsky A.V."/>
            <person name="Kublanov I.V."/>
            <person name="Kolganova T.V."/>
            <person name="Lebedinsky A.V."/>
            <person name="Chernyh N.A."/>
            <person name="Bonch-Osmolovskaya E.A."/>
            <person name="Skryabin K.G."/>
        </authorList>
    </citation>
    <scope>NUCLEOTIDE SEQUENCE [LARGE SCALE GENOMIC DNA]</scope>
    <source>
        <strain>DSM 18924 / JCM 16383 / VKM B-2413 / 1221n</strain>
    </source>
</reference>
<comment type="function">
    <text evidence="1">May function in recognizing stalled ribosomes, interact with stem-loop structures in stalled mRNA molecules, and effect endonucleolytic cleavage of the mRNA. May play a role in the release non-functional ribosomes and degradation of damaged mRNAs. Has endoribonuclease activity.</text>
</comment>
<comment type="cofactor">
    <cofactor evidence="1">
        <name>a divalent metal cation</name>
        <dbReference type="ChEBI" id="CHEBI:60240"/>
    </cofactor>
</comment>
<comment type="subunit">
    <text evidence="1">Monomer.</text>
</comment>
<comment type="subcellular location">
    <subcellularLocation>
        <location evidence="1">Cytoplasm</location>
    </subcellularLocation>
</comment>
<comment type="domain">
    <text evidence="1">The N-terminal domain has the RNA-binding Sm fold. It harbors the endoribonuclease activity.</text>
</comment>
<comment type="similarity">
    <text evidence="1">Belongs to the eukaryotic release factor 1 family. Pelota subfamily.</text>
</comment>